<organism>
    <name type="scientific">Klebsiella pneumoniae subsp. pneumoniae (strain ATCC 700721 / MGH 78578)</name>
    <dbReference type="NCBI Taxonomy" id="272620"/>
    <lineage>
        <taxon>Bacteria</taxon>
        <taxon>Pseudomonadati</taxon>
        <taxon>Pseudomonadota</taxon>
        <taxon>Gammaproteobacteria</taxon>
        <taxon>Enterobacterales</taxon>
        <taxon>Enterobacteriaceae</taxon>
        <taxon>Klebsiella/Raoultella group</taxon>
        <taxon>Klebsiella</taxon>
        <taxon>Klebsiella pneumoniae complex</taxon>
    </lineage>
</organism>
<reference key="1">
    <citation type="submission" date="2006-09" db="EMBL/GenBank/DDBJ databases">
        <authorList>
            <consortium name="The Klebsiella pneumonia Genome Sequencing Project"/>
            <person name="McClelland M."/>
            <person name="Sanderson E.K."/>
            <person name="Spieth J."/>
            <person name="Clifton W.S."/>
            <person name="Latreille P."/>
            <person name="Sabo A."/>
            <person name="Pepin K."/>
            <person name="Bhonagiri V."/>
            <person name="Porwollik S."/>
            <person name="Ali J."/>
            <person name="Wilson R.K."/>
        </authorList>
    </citation>
    <scope>NUCLEOTIDE SEQUENCE [LARGE SCALE GENOMIC DNA]</scope>
    <source>
        <strain>ATCC 700721 / MGH 78578</strain>
    </source>
</reference>
<comment type="function">
    <text evidence="1">Required for the timely initiation of chromosomal replication via direct interactions with the DnaA initiator protein.</text>
</comment>
<comment type="subunit">
    <text evidence="1">Homotetramer; dimer of dimers.</text>
</comment>
<comment type="similarity">
    <text evidence="1">Belongs to the SIS family. DiaA subfamily.</text>
</comment>
<protein>
    <recommendedName>
        <fullName evidence="1">DnaA initiator-associating protein DiaA</fullName>
    </recommendedName>
</protein>
<gene>
    <name evidence="1" type="primary">diaA</name>
    <name type="ordered locus">KPN78578_35280</name>
    <name type="ORF">KPN_03557</name>
</gene>
<keyword id="KW-0235">DNA replication</keyword>
<accession>A6TEG8</accession>
<proteinExistence type="inferred from homology"/>
<name>DIAA_KLEP7</name>
<sequence>MLDRIKACFTESIQTQIAAAEALPDAISRAAMTLVQSLLNGNKILCCGNGTSAANAQHFAASMINRFETERPGLPAIALNTDNVVLTAIANDRLHDEIYAKQVRALGHAGDVLLAISTRGNSRDIVKAVEAAVTRDMTIVALTGYDGGELAGLLGQQDVEIRIPSHRSARIQEMHMLTVNCLCDLIDNTLFPHQDD</sequence>
<feature type="chain" id="PRO_1000065545" description="DnaA initiator-associating protein DiaA">
    <location>
        <begin position="1"/>
        <end position="196"/>
    </location>
</feature>
<feature type="domain" description="SIS" evidence="1">
    <location>
        <begin position="34"/>
        <end position="196"/>
    </location>
</feature>
<evidence type="ECO:0000255" key="1">
    <source>
        <dbReference type="HAMAP-Rule" id="MF_01157"/>
    </source>
</evidence>
<dbReference type="EMBL" id="CP000647">
    <property type="protein sequence ID" value="ABR78952.1"/>
    <property type="molecule type" value="Genomic_DNA"/>
</dbReference>
<dbReference type="RefSeq" id="WP_002918211.1">
    <property type="nucleotide sequence ID" value="NC_009648.1"/>
</dbReference>
<dbReference type="SMR" id="A6TEG8"/>
<dbReference type="STRING" id="272620.KPN_03557"/>
<dbReference type="PaxDb" id="272620-KPN_03557"/>
<dbReference type="EnsemblBacteria" id="ABR78952">
    <property type="protein sequence ID" value="ABR78952"/>
    <property type="gene ID" value="KPN_03557"/>
</dbReference>
<dbReference type="GeneID" id="97393342"/>
<dbReference type="KEGG" id="kpn:KPN_03557"/>
<dbReference type="HOGENOM" id="CLU_080999_3_1_6"/>
<dbReference type="Proteomes" id="UP000000265">
    <property type="component" value="Chromosome"/>
</dbReference>
<dbReference type="GO" id="GO:0097367">
    <property type="term" value="F:carbohydrate derivative binding"/>
    <property type="evidence" value="ECO:0007669"/>
    <property type="project" value="InterPro"/>
</dbReference>
<dbReference type="GO" id="GO:1901135">
    <property type="term" value="P:carbohydrate derivative metabolic process"/>
    <property type="evidence" value="ECO:0007669"/>
    <property type="project" value="InterPro"/>
</dbReference>
<dbReference type="GO" id="GO:0006260">
    <property type="term" value="P:DNA replication"/>
    <property type="evidence" value="ECO:0007669"/>
    <property type="project" value="UniProtKB-UniRule"/>
</dbReference>
<dbReference type="CDD" id="cd05006">
    <property type="entry name" value="SIS_GmhA"/>
    <property type="match status" value="1"/>
</dbReference>
<dbReference type="FunFam" id="3.40.50.10490:FF:000006">
    <property type="entry name" value="DnaA initiator-associating protein DiaA"/>
    <property type="match status" value="1"/>
</dbReference>
<dbReference type="Gene3D" id="3.40.50.10490">
    <property type="entry name" value="Glucose-6-phosphate isomerase like protein, domain 1"/>
    <property type="match status" value="1"/>
</dbReference>
<dbReference type="HAMAP" id="MF_01157">
    <property type="entry name" value="SIS_DiaA"/>
    <property type="match status" value="1"/>
</dbReference>
<dbReference type="InterPro" id="IPR023070">
    <property type="entry name" value="DiaA"/>
</dbReference>
<dbReference type="InterPro" id="IPR035461">
    <property type="entry name" value="GmhA/DiaA"/>
</dbReference>
<dbReference type="InterPro" id="IPR001347">
    <property type="entry name" value="SIS_dom"/>
</dbReference>
<dbReference type="InterPro" id="IPR046348">
    <property type="entry name" value="SIS_dom_sf"/>
</dbReference>
<dbReference type="InterPro" id="IPR050099">
    <property type="entry name" value="SIS_GmhA/DiaA_subfam"/>
</dbReference>
<dbReference type="NCBIfam" id="NF008138">
    <property type="entry name" value="PRK10886.1"/>
    <property type="match status" value="1"/>
</dbReference>
<dbReference type="PANTHER" id="PTHR30390:SF6">
    <property type="entry name" value="DNAA INITIATOR-ASSOCIATING PROTEIN DIAA"/>
    <property type="match status" value="1"/>
</dbReference>
<dbReference type="PANTHER" id="PTHR30390">
    <property type="entry name" value="SEDOHEPTULOSE 7-PHOSPHATE ISOMERASE / DNAA INITIATOR-ASSOCIATING FACTOR FOR REPLICATION INITIATION"/>
    <property type="match status" value="1"/>
</dbReference>
<dbReference type="Pfam" id="PF13580">
    <property type="entry name" value="SIS_2"/>
    <property type="match status" value="1"/>
</dbReference>
<dbReference type="SUPFAM" id="SSF53697">
    <property type="entry name" value="SIS domain"/>
    <property type="match status" value="1"/>
</dbReference>
<dbReference type="PROSITE" id="PS51464">
    <property type="entry name" value="SIS"/>
    <property type="match status" value="1"/>
</dbReference>